<dbReference type="EC" id="3.2.-.-" evidence="1"/>
<dbReference type="EMBL" id="CU928162">
    <property type="protein sequence ID" value="CAR06848.1"/>
    <property type="molecule type" value="Genomic_DNA"/>
</dbReference>
<dbReference type="RefSeq" id="WP_001207538.1">
    <property type="nucleotide sequence ID" value="NC_011745.1"/>
</dbReference>
<dbReference type="SMR" id="B7MRT1"/>
<dbReference type="KEGG" id="ecq:ECED1_0641"/>
<dbReference type="HOGENOM" id="CLU_036838_2_0_6"/>
<dbReference type="Proteomes" id="UP000000748">
    <property type="component" value="Chromosome"/>
</dbReference>
<dbReference type="GO" id="GO:0005829">
    <property type="term" value="C:cytosol"/>
    <property type="evidence" value="ECO:0007669"/>
    <property type="project" value="TreeGrafter"/>
</dbReference>
<dbReference type="GO" id="GO:0008477">
    <property type="term" value="F:purine nucleosidase activity"/>
    <property type="evidence" value="ECO:0007669"/>
    <property type="project" value="TreeGrafter"/>
</dbReference>
<dbReference type="GO" id="GO:0045437">
    <property type="term" value="F:uridine nucleosidase activity"/>
    <property type="evidence" value="ECO:0007669"/>
    <property type="project" value="InterPro"/>
</dbReference>
<dbReference type="GO" id="GO:0015949">
    <property type="term" value="P:nucleobase-containing small molecule interconversion"/>
    <property type="evidence" value="ECO:0007669"/>
    <property type="project" value="InterPro"/>
</dbReference>
<dbReference type="GO" id="GO:0006152">
    <property type="term" value="P:purine nucleoside catabolic process"/>
    <property type="evidence" value="ECO:0007669"/>
    <property type="project" value="TreeGrafter"/>
</dbReference>
<dbReference type="GO" id="GO:0006206">
    <property type="term" value="P:pyrimidine nucleobase metabolic process"/>
    <property type="evidence" value="ECO:0007669"/>
    <property type="project" value="UniProtKB-UniRule"/>
</dbReference>
<dbReference type="CDD" id="cd02651">
    <property type="entry name" value="nuc_hydro_IU_UC_XIUA"/>
    <property type="match status" value="1"/>
</dbReference>
<dbReference type="FunFam" id="3.90.245.10:FF:000001">
    <property type="entry name" value="Pyrimidine-specific ribonucleoside hydrolase RihA"/>
    <property type="match status" value="1"/>
</dbReference>
<dbReference type="Gene3D" id="3.90.245.10">
    <property type="entry name" value="Ribonucleoside hydrolase-like"/>
    <property type="match status" value="1"/>
</dbReference>
<dbReference type="HAMAP" id="MF_01431">
    <property type="entry name" value="Pyrim_hydro_RihA"/>
    <property type="match status" value="1"/>
</dbReference>
<dbReference type="InterPro" id="IPR015910">
    <property type="entry name" value="I/U_nuclsd_hydro_CS"/>
</dbReference>
<dbReference type="InterPro" id="IPR001910">
    <property type="entry name" value="Inosine/uridine_hydrolase_dom"/>
</dbReference>
<dbReference type="InterPro" id="IPR023186">
    <property type="entry name" value="IUNH"/>
</dbReference>
<dbReference type="InterPro" id="IPR022975">
    <property type="entry name" value="Pyrim_hydro_RihA"/>
</dbReference>
<dbReference type="InterPro" id="IPR036452">
    <property type="entry name" value="Ribo_hydro-like"/>
</dbReference>
<dbReference type="NCBIfam" id="NF007761">
    <property type="entry name" value="PRK10443.1"/>
    <property type="match status" value="1"/>
</dbReference>
<dbReference type="PANTHER" id="PTHR12304">
    <property type="entry name" value="INOSINE-URIDINE PREFERRING NUCLEOSIDE HYDROLASE"/>
    <property type="match status" value="1"/>
</dbReference>
<dbReference type="PANTHER" id="PTHR12304:SF4">
    <property type="entry name" value="URIDINE NUCLEOSIDASE"/>
    <property type="match status" value="1"/>
</dbReference>
<dbReference type="Pfam" id="PF01156">
    <property type="entry name" value="IU_nuc_hydro"/>
    <property type="match status" value="1"/>
</dbReference>
<dbReference type="SUPFAM" id="SSF53590">
    <property type="entry name" value="Nucleoside hydrolase"/>
    <property type="match status" value="1"/>
</dbReference>
<dbReference type="PROSITE" id="PS01247">
    <property type="entry name" value="IUNH"/>
    <property type="match status" value="1"/>
</dbReference>
<feature type="chain" id="PRO_1000184894" description="Pyrimidine-specific ribonucleoside hydrolase RihA">
    <location>
        <begin position="1"/>
        <end position="311"/>
    </location>
</feature>
<feature type="active site" evidence="1">
    <location>
        <position position="240"/>
    </location>
</feature>
<organism>
    <name type="scientific">Escherichia coli O81 (strain ED1a)</name>
    <dbReference type="NCBI Taxonomy" id="585397"/>
    <lineage>
        <taxon>Bacteria</taxon>
        <taxon>Pseudomonadati</taxon>
        <taxon>Pseudomonadota</taxon>
        <taxon>Gammaproteobacteria</taxon>
        <taxon>Enterobacterales</taxon>
        <taxon>Enterobacteriaceae</taxon>
        <taxon>Escherichia</taxon>
    </lineage>
</organism>
<reference key="1">
    <citation type="journal article" date="2009" name="PLoS Genet.">
        <title>Organised genome dynamics in the Escherichia coli species results in highly diverse adaptive paths.</title>
        <authorList>
            <person name="Touchon M."/>
            <person name="Hoede C."/>
            <person name="Tenaillon O."/>
            <person name="Barbe V."/>
            <person name="Baeriswyl S."/>
            <person name="Bidet P."/>
            <person name="Bingen E."/>
            <person name="Bonacorsi S."/>
            <person name="Bouchier C."/>
            <person name="Bouvet O."/>
            <person name="Calteau A."/>
            <person name="Chiapello H."/>
            <person name="Clermont O."/>
            <person name="Cruveiller S."/>
            <person name="Danchin A."/>
            <person name="Diard M."/>
            <person name="Dossat C."/>
            <person name="Karoui M.E."/>
            <person name="Frapy E."/>
            <person name="Garry L."/>
            <person name="Ghigo J.M."/>
            <person name="Gilles A.M."/>
            <person name="Johnson J."/>
            <person name="Le Bouguenec C."/>
            <person name="Lescat M."/>
            <person name="Mangenot S."/>
            <person name="Martinez-Jehanne V."/>
            <person name="Matic I."/>
            <person name="Nassif X."/>
            <person name="Oztas S."/>
            <person name="Petit M.A."/>
            <person name="Pichon C."/>
            <person name="Rouy Z."/>
            <person name="Ruf C.S."/>
            <person name="Schneider D."/>
            <person name="Tourret J."/>
            <person name="Vacherie B."/>
            <person name="Vallenet D."/>
            <person name="Medigue C."/>
            <person name="Rocha E.P.C."/>
            <person name="Denamur E."/>
        </authorList>
    </citation>
    <scope>NUCLEOTIDE SEQUENCE [LARGE SCALE GENOMIC DNA]</scope>
    <source>
        <strain>ED1a</strain>
    </source>
</reference>
<sequence>MALPILLDCDPGHDDAIAIVLALASPELDVKAITSSAGNQTPEKTLRNVLRMLTLLNRTDIPVASGAVKPLMRNLIIADNVHGESGLDGPALPEPTFAPQNCTAVELMAKTLCESEEPVTIVSTGPQTNVALLLNSHPELHSKIARIVIMGGAMGLGNWTPAAEFNIYVDPEAAEIVFQSGIPVVMAGLDVTHKAQIHVEDTERFRAIGNPVSTIVAELLDFFLEYHKDEKWGFVGAPLHDPCTIAWLLKPELFTTVERWVGVETQGKYTQGMTVVDYYYLTGNKPNATVMVDVDRQGFVDLLADRLKFYA</sequence>
<gene>
    <name evidence="1" type="primary">rihA</name>
    <name type="ordered locus">ECED1_0641</name>
</gene>
<name>RIHA_ECO81</name>
<protein>
    <recommendedName>
        <fullName evidence="1">Pyrimidine-specific ribonucleoside hydrolase RihA</fullName>
        <ecNumber evidence="1">3.2.-.-</ecNumber>
    </recommendedName>
    <alternativeName>
        <fullName evidence="1">Cytidine/uridine-specific hydrolase</fullName>
    </alternativeName>
</protein>
<accession>B7MRT1</accession>
<proteinExistence type="inferred from homology"/>
<comment type="function">
    <text evidence="1">Hydrolyzes with equal efficiency cytidine or uridine to ribose and cytosine or uracil, respectively.</text>
</comment>
<comment type="similarity">
    <text evidence="1">Belongs to the IUNH family. RihA subfamily.</text>
</comment>
<evidence type="ECO:0000255" key="1">
    <source>
        <dbReference type="HAMAP-Rule" id="MF_01431"/>
    </source>
</evidence>
<keyword id="KW-0326">Glycosidase</keyword>
<keyword id="KW-0378">Hydrolase</keyword>